<dbReference type="EMBL" id="CP000817">
    <property type="protein sequence ID" value="ACA38624.1"/>
    <property type="molecule type" value="Genomic_DNA"/>
</dbReference>
<dbReference type="RefSeq" id="WP_012292764.1">
    <property type="nucleotide sequence ID" value="NC_010382.1"/>
</dbReference>
<dbReference type="SMR" id="B1HM52"/>
<dbReference type="EnsemblBacteria" id="ACA38624">
    <property type="protein sequence ID" value="ACA38624"/>
    <property type="gene ID" value="Bsph_1012"/>
</dbReference>
<dbReference type="KEGG" id="lsp:Bsph_1012"/>
<dbReference type="HOGENOM" id="CLU_079215_4_2_9"/>
<dbReference type="Proteomes" id="UP000002164">
    <property type="component" value="Chromosome"/>
</dbReference>
<dbReference type="GO" id="GO:0005886">
    <property type="term" value="C:plasma membrane"/>
    <property type="evidence" value="ECO:0007669"/>
    <property type="project" value="UniProtKB-SubCell"/>
</dbReference>
<dbReference type="GO" id="GO:0045259">
    <property type="term" value="C:proton-transporting ATP synthase complex"/>
    <property type="evidence" value="ECO:0007669"/>
    <property type="project" value="UniProtKB-KW"/>
</dbReference>
<dbReference type="GO" id="GO:0046933">
    <property type="term" value="F:proton-transporting ATP synthase activity, rotational mechanism"/>
    <property type="evidence" value="ECO:0007669"/>
    <property type="project" value="UniProtKB-UniRule"/>
</dbReference>
<dbReference type="GO" id="GO:0046961">
    <property type="term" value="F:proton-transporting ATPase activity, rotational mechanism"/>
    <property type="evidence" value="ECO:0007669"/>
    <property type="project" value="TreeGrafter"/>
</dbReference>
<dbReference type="CDD" id="cd06503">
    <property type="entry name" value="ATP-synt_Fo_b"/>
    <property type="match status" value="1"/>
</dbReference>
<dbReference type="Gene3D" id="6.10.250.1580">
    <property type="match status" value="1"/>
</dbReference>
<dbReference type="HAMAP" id="MF_01398">
    <property type="entry name" value="ATP_synth_b_bprime"/>
    <property type="match status" value="1"/>
</dbReference>
<dbReference type="InterPro" id="IPR028987">
    <property type="entry name" value="ATP_synth_B-like_membr_sf"/>
</dbReference>
<dbReference type="InterPro" id="IPR002146">
    <property type="entry name" value="ATP_synth_b/b'su_bac/chlpt"/>
</dbReference>
<dbReference type="InterPro" id="IPR005864">
    <property type="entry name" value="ATP_synth_F0_bsu_bac"/>
</dbReference>
<dbReference type="InterPro" id="IPR050059">
    <property type="entry name" value="ATP_synthase_B_chain"/>
</dbReference>
<dbReference type="NCBIfam" id="TIGR01144">
    <property type="entry name" value="ATP_synt_b"/>
    <property type="match status" value="1"/>
</dbReference>
<dbReference type="PANTHER" id="PTHR33445:SF1">
    <property type="entry name" value="ATP SYNTHASE SUBUNIT B"/>
    <property type="match status" value="1"/>
</dbReference>
<dbReference type="PANTHER" id="PTHR33445">
    <property type="entry name" value="ATP SYNTHASE SUBUNIT B', CHLOROPLASTIC"/>
    <property type="match status" value="1"/>
</dbReference>
<dbReference type="Pfam" id="PF00430">
    <property type="entry name" value="ATP-synt_B"/>
    <property type="match status" value="1"/>
</dbReference>
<dbReference type="SUPFAM" id="SSF81573">
    <property type="entry name" value="F1F0 ATP synthase subunit B, membrane domain"/>
    <property type="match status" value="1"/>
</dbReference>
<feature type="chain" id="PRO_0000368570" description="ATP synthase subunit b">
    <location>
        <begin position="1"/>
        <end position="173"/>
    </location>
</feature>
<feature type="transmembrane region" description="Helical" evidence="1">
    <location>
        <begin position="20"/>
        <end position="40"/>
    </location>
</feature>
<reference key="1">
    <citation type="journal article" date="2008" name="J. Bacteriol.">
        <title>Complete genome sequence of the mosquitocidal bacterium Bacillus sphaericus C3-41 and comparison with those of closely related Bacillus species.</title>
        <authorList>
            <person name="Hu X."/>
            <person name="Fan W."/>
            <person name="Han B."/>
            <person name="Liu H."/>
            <person name="Zheng D."/>
            <person name="Li Q."/>
            <person name="Dong W."/>
            <person name="Yan J."/>
            <person name="Gao M."/>
            <person name="Berry C."/>
            <person name="Yuan Z."/>
        </authorList>
    </citation>
    <scope>NUCLEOTIDE SEQUENCE [LARGE SCALE GENOMIC DNA]</scope>
    <source>
        <strain>C3-41</strain>
    </source>
</reference>
<keyword id="KW-0066">ATP synthesis</keyword>
<keyword id="KW-1003">Cell membrane</keyword>
<keyword id="KW-0138">CF(0)</keyword>
<keyword id="KW-0375">Hydrogen ion transport</keyword>
<keyword id="KW-0406">Ion transport</keyword>
<keyword id="KW-0472">Membrane</keyword>
<keyword id="KW-0812">Transmembrane</keyword>
<keyword id="KW-1133">Transmembrane helix</keyword>
<keyword id="KW-0813">Transport</keyword>
<sequence length="173" mass="19085">MYLDYLVLGAGASKFNNGDIIATLAIFLVLMFLLKKVAWGPLMGIMQQREELVASEIEAAEKARKESHQFLEEQKSLLKEARTEAQSIVEGAKKQGELQKDEILTAARNEANRLKESALREIESEKEKAIAAVRDEVVSLSVLAASKVLSKEISEADNRALIEETIAKAGEAR</sequence>
<comment type="function">
    <text evidence="1">F(1)F(0) ATP synthase produces ATP from ADP in the presence of a proton or sodium gradient. F-type ATPases consist of two structural domains, F(1) containing the extramembraneous catalytic core and F(0) containing the membrane proton channel, linked together by a central stalk and a peripheral stalk. During catalysis, ATP synthesis in the catalytic domain of F(1) is coupled via a rotary mechanism of the central stalk subunits to proton translocation.</text>
</comment>
<comment type="function">
    <text evidence="1">Component of the F(0) channel, it forms part of the peripheral stalk, linking F(1) to F(0).</text>
</comment>
<comment type="subunit">
    <text evidence="1">F-type ATPases have 2 components, F(1) - the catalytic core - and F(0) - the membrane proton channel. F(1) has five subunits: alpha(3), beta(3), gamma(1), delta(1), epsilon(1). F(0) has three main subunits: a(1), b(2) and c(10-14). The alpha and beta chains form an alternating ring which encloses part of the gamma chain. F(1) is attached to F(0) by a central stalk formed by the gamma and epsilon chains, while a peripheral stalk is formed by the delta and b chains.</text>
</comment>
<comment type="subcellular location">
    <subcellularLocation>
        <location evidence="1">Cell membrane</location>
        <topology evidence="1">Single-pass membrane protein</topology>
    </subcellularLocation>
</comment>
<comment type="similarity">
    <text evidence="1">Belongs to the ATPase B chain family.</text>
</comment>
<evidence type="ECO:0000255" key="1">
    <source>
        <dbReference type="HAMAP-Rule" id="MF_01398"/>
    </source>
</evidence>
<name>ATPF_LYSSC</name>
<proteinExistence type="inferred from homology"/>
<protein>
    <recommendedName>
        <fullName evidence="1">ATP synthase subunit b</fullName>
    </recommendedName>
    <alternativeName>
        <fullName evidence="1">ATP synthase F(0) sector subunit b</fullName>
    </alternativeName>
    <alternativeName>
        <fullName evidence="1">ATPase subunit I</fullName>
    </alternativeName>
    <alternativeName>
        <fullName evidence="1">F-type ATPase subunit b</fullName>
        <shortName evidence="1">F-ATPase subunit b</shortName>
    </alternativeName>
</protein>
<gene>
    <name evidence="1" type="primary">atpF</name>
    <name type="ordered locus">Bsph_1012</name>
</gene>
<accession>B1HM52</accession>
<organism>
    <name type="scientific">Lysinibacillus sphaericus (strain C3-41)</name>
    <dbReference type="NCBI Taxonomy" id="444177"/>
    <lineage>
        <taxon>Bacteria</taxon>
        <taxon>Bacillati</taxon>
        <taxon>Bacillota</taxon>
        <taxon>Bacilli</taxon>
        <taxon>Bacillales</taxon>
        <taxon>Bacillaceae</taxon>
        <taxon>Lysinibacillus</taxon>
    </lineage>
</organism>